<protein>
    <recommendedName>
        <fullName>Uncharacterized protein YnjA</fullName>
    </recommendedName>
</protein>
<name>YNJA_ECOLI</name>
<feature type="chain" id="PRO_0000169007" description="Uncharacterized protein YnjA">
    <location>
        <begin position="1"/>
        <end position="182"/>
    </location>
</feature>
<accession>P76222</accession>
<accession>Q2MB36</accession>
<gene>
    <name type="primary">ynjA</name>
    <name type="ordered locus">b1753</name>
    <name type="ordered locus">JW1742</name>
</gene>
<reference key="1">
    <citation type="journal article" date="1997" name="Science">
        <title>The complete genome sequence of Escherichia coli K-12.</title>
        <authorList>
            <person name="Blattner F.R."/>
            <person name="Plunkett G. III"/>
            <person name="Bloch C.A."/>
            <person name="Perna N.T."/>
            <person name="Burland V."/>
            <person name="Riley M."/>
            <person name="Collado-Vides J."/>
            <person name="Glasner J.D."/>
            <person name="Rode C.K."/>
            <person name="Mayhew G.F."/>
            <person name="Gregor J."/>
            <person name="Davis N.W."/>
            <person name="Kirkpatrick H.A."/>
            <person name="Goeden M.A."/>
            <person name="Rose D.J."/>
            <person name="Mau B."/>
            <person name="Shao Y."/>
        </authorList>
    </citation>
    <scope>NUCLEOTIDE SEQUENCE [LARGE SCALE GENOMIC DNA]</scope>
    <source>
        <strain>K12 / MG1655 / ATCC 47076</strain>
    </source>
</reference>
<reference key="2">
    <citation type="journal article" date="2006" name="Mol. Syst. Biol.">
        <title>Highly accurate genome sequences of Escherichia coli K-12 strains MG1655 and W3110.</title>
        <authorList>
            <person name="Hayashi K."/>
            <person name="Morooka N."/>
            <person name="Yamamoto Y."/>
            <person name="Fujita K."/>
            <person name="Isono K."/>
            <person name="Choi S."/>
            <person name="Ohtsubo E."/>
            <person name="Baba T."/>
            <person name="Wanner B.L."/>
            <person name="Mori H."/>
            <person name="Horiuchi T."/>
        </authorList>
    </citation>
    <scope>NUCLEOTIDE SEQUENCE [LARGE SCALE GENOMIC DNA]</scope>
    <source>
        <strain>K12 / W3110 / ATCC 27325 / DSM 5911</strain>
    </source>
</reference>
<dbReference type="EMBL" id="U00096">
    <property type="protein sequence ID" value="AAC74823.1"/>
    <property type="molecule type" value="Genomic_DNA"/>
</dbReference>
<dbReference type="EMBL" id="AP009048">
    <property type="protein sequence ID" value="BAE76520.1"/>
    <property type="molecule type" value="Genomic_DNA"/>
</dbReference>
<dbReference type="PIR" id="A64935">
    <property type="entry name" value="A64935"/>
</dbReference>
<dbReference type="RefSeq" id="NP_416267.1">
    <property type="nucleotide sequence ID" value="NC_000913.3"/>
</dbReference>
<dbReference type="RefSeq" id="WP_000524097.1">
    <property type="nucleotide sequence ID" value="NZ_SSZK01000001.1"/>
</dbReference>
<dbReference type="SMR" id="P76222"/>
<dbReference type="BioGRID" id="4262128">
    <property type="interactions" value="24"/>
</dbReference>
<dbReference type="FunCoup" id="P76222">
    <property type="interactions" value="64"/>
</dbReference>
<dbReference type="IntAct" id="P76222">
    <property type="interactions" value="3"/>
</dbReference>
<dbReference type="STRING" id="511145.b1753"/>
<dbReference type="jPOST" id="P76222"/>
<dbReference type="PaxDb" id="511145-b1753"/>
<dbReference type="EnsemblBacteria" id="AAC74823">
    <property type="protein sequence ID" value="AAC74823"/>
    <property type="gene ID" value="b1753"/>
</dbReference>
<dbReference type="GeneID" id="946270"/>
<dbReference type="KEGG" id="ecj:JW1742"/>
<dbReference type="KEGG" id="eco:b1753"/>
<dbReference type="KEGG" id="ecoc:C3026_10010"/>
<dbReference type="PATRIC" id="fig|511145.12.peg.1826"/>
<dbReference type="EchoBASE" id="EB3759"/>
<dbReference type="eggNOG" id="COG2128">
    <property type="taxonomic scope" value="Bacteria"/>
</dbReference>
<dbReference type="HOGENOM" id="CLU_082760_7_2_6"/>
<dbReference type="InParanoid" id="P76222"/>
<dbReference type="OMA" id="RELAVYW"/>
<dbReference type="OrthoDB" id="9801997at2"/>
<dbReference type="PhylomeDB" id="P76222"/>
<dbReference type="BioCyc" id="EcoCyc:G6948-MONOMER"/>
<dbReference type="PRO" id="PR:P76222"/>
<dbReference type="Proteomes" id="UP000000625">
    <property type="component" value="Chromosome"/>
</dbReference>
<dbReference type="GO" id="GO:0051920">
    <property type="term" value="F:peroxiredoxin activity"/>
    <property type="evidence" value="ECO:0007669"/>
    <property type="project" value="InterPro"/>
</dbReference>
<dbReference type="Gene3D" id="1.20.1290.10">
    <property type="entry name" value="AhpD-like"/>
    <property type="match status" value="1"/>
</dbReference>
<dbReference type="InterPro" id="IPR029032">
    <property type="entry name" value="AhpD-like"/>
</dbReference>
<dbReference type="InterPro" id="IPR003779">
    <property type="entry name" value="CMD-like"/>
</dbReference>
<dbReference type="PANTHER" id="PTHR34846">
    <property type="entry name" value="4-CARBOXYMUCONOLACTONE DECARBOXYLASE FAMILY PROTEIN (AFU_ORTHOLOGUE AFUA_6G11590)"/>
    <property type="match status" value="1"/>
</dbReference>
<dbReference type="PANTHER" id="PTHR34846:SF10">
    <property type="entry name" value="CYTOPLASMIC PROTEIN"/>
    <property type="match status" value="1"/>
</dbReference>
<dbReference type="Pfam" id="PF02627">
    <property type="entry name" value="CMD"/>
    <property type="match status" value="1"/>
</dbReference>
<dbReference type="SUPFAM" id="SSF69118">
    <property type="entry name" value="AhpD-like"/>
    <property type="match status" value="1"/>
</dbReference>
<comment type="similarity">
    <text evidence="1">To M.tuberculosis Rv2313c.</text>
</comment>
<organism>
    <name type="scientific">Escherichia coli (strain K12)</name>
    <dbReference type="NCBI Taxonomy" id="83333"/>
    <lineage>
        <taxon>Bacteria</taxon>
        <taxon>Pseudomonadati</taxon>
        <taxon>Pseudomonadota</taxon>
        <taxon>Gammaproteobacteria</taxon>
        <taxon>Enterobacterales</taxon>
        <taxon>Enterobacteriaceae</taxon>
        <taxon>Escherichia</taxon>
    </lineage>
</organism>
<sequence length="182" mass="20533">MGLPPLSKIPLILRPQAWLHRRHYGEVLSPIRWWGRIPFIFYLVSMFVGWLERKRSPLDPVVRSLVSARIAQMCLCEFCVDITSMKVAERTGSSDKLLAVADWRQSPLFSDEERLALEYAEAASVTPPTVDDALRTRLAAHFDAQALTELTALIGLQNLSARFNSAMDIPAQGLCRIPEKRS</sequence>
<keyword id="KW-1185">Reference proteome</keyword>
<evidence type="ECO:0000305" key="1"/>
<proteinExistence type="predicted"/>